<proteinExistence type="evidence at transcript level"/>
<protein>
    <recommendedName>
        <fullName>High mobility group protein 20A</fullName>
    </recommendedName>
    <alternativeName>
        <fullName>HMG box-containing protein 20A</fullName>
    </alternativeName>
</protein>
<keyword id="KW-0175">Coiled coil</keyword>
<keyword id="KW-0238">DNA-binding</keyword>
<keyword id="KW-0539">Nucleus</keyword>
<keyword id="KW-1185">Reference proteome</keyword>
<keyword id="KW-0804">Transcription</keyword>
<keyword id="KW-0805">Transcription regulation</keyword>
<name>HM20A_XENLA</name>
<reference key="1">
    <citation type="submission" date="2004-07" db="EMBL/GenBank/DDBJ databases">
        <authorList>
            <consortium name="NIH - Xenopus Gene Collection (XGC) project"/>
        </authorList>
    </citation>
    <scope>NUCLEOTIDE SEQUENCE [LARGE SCALE MRNA]</scope>
    <source>
        <tissue>Spleen</tissue>
    </source>
</reference>
<sequence>MESTASAVPPSSEDLVADTKENNQPPFCGTTVSGSSQAPLHPHSPTLQQDEREELTLHQSGEQQLGNSGELRQEEELPKARRGGWNKGRKRKRSPRDNNAPKAPLTGYVRFMNERREQLRTERPDVPFPEITRIVGSEWSKLPAHEKQHYLDEAEKDKERYTKELQKYQNTDAYQTYSRKAKSRQKGRQQRQEGVRGVPSNTEKESILKERPIFDIPIFTEEFLNHSKAREAELRQLRKSNMEFEERNAALQKHVESMRSAVQRLEAELSQEHERNSLLQQHLQSVRQALTHCLQSVPVPGTTETPTLETIDLYMSRLQNAVLTHPKESEVIISGVREVLSQLEG</sequence>
<gene>
    <name type="primary">hmg20a</name>
</gene>
<accession>Q6AZF8</accession>
<feature type="chain" id="PRO_0000238652" description="High mobility group protein 20A">
    <location>
        <begin position="1"/>
        <end position="345"/>
    </location>
</feature>
<feature type="DNA-binding region" description="HMG box" evidence="2">
    <location>
        <begin position="101"/>
        <end position="169"/>
    </location>
</feature>
<feature type="region of interest" description="Disordered" evidence="3">
    <location>
        <begin position="1"/>
        <end position="130"/>
    </location>
</feature>
<feature type="region of interest" description="Disordered" evidence="3">
    <location>
        <begin position="166"/>
        <end position="206"/>
    </location>
</feature>
<feature type="coiled-coil region" evidence="1">
    <location>
        <begin position="227"/>
        <end position="285"/>
    </location>
</feature>
<feature type="compositionally biased region" description="Polar residues" evidence="3">
    <location>
        <begin position="22"/>
        <end position="38"/>
    </location>
</feature>
<feature type="compositionally biased region" description="Polar residues" evidence="3">
    <location>
        <begin position="57"/>
        <end position="67"/>
    </location>
</feature>
<feature type="compositionally biased region" description="Basic residues" evidence="3">
    <location>
        <begin position="80"/>
        <end position="94"/>
    </location>
</feature>
<feature type="compositionally biased region" description="Basic and acidic residues" evidence="3">
    <location>
        <begin position="112"/>
        <end position="125"/>
    </location>
</feature>
<feature type="compositionally biased region" description="Polar residues" evidence="3">
    <location>
        <begin position="167"/>
        <end position="178"/>
    </location>
</feature>
<feature type="compositionally biased region" description="Basic residues" evidence="3">
    <location>
        <begin position="179"/>
        <end position="189"/>
    </location>
</feature>
<dbReference type="EMBL" id="BC078062">
    <property type="protein sequence ID" value="AAH78062.1"/>
    <property type="molecule type" value="mRNA"/>
</dbReference>
<dbReference type="RefSeq" id="NP_001087141.1">
    <property type="nucleotide sequence ID" value="NM_001093672.1"/>
</dbReference>
<dbReference type="SMR" id="Q6AZF8"/>
<dbReference type="BioGRID" id="103890">
    <property type="interactions" value="1"/>
</dbReference>
<dbReference type="DNASU" id="447030"/>
<dbReference type="GeneID" id="447030"/>
<dbReference type="KEGG" id="xla:447030"/>
<dbReference type="AGR" id="Xenbase:XB-GENE-955359"/>
<dbReference type="CTD" id="447030"/>
<dbReference type="Xenbase" id="XB-GENE-955359">
    <property type="gene designation" value="hmg20a.L"/>
</dbReference>
<dbReference type="OMA" id="QPAYNGE"/>
<dbReference type="OrthoDB" id="3213154at2759"/>
<dbReference type="Proteomes" id="UP000186698">
    <property type="component" value="Chromosome 3L"/>
</dbReference>
<dbReference type="Bgee" id="447030">
    <property type="expression patterns" value="Expressed in lung and 19 other cell types or tissues"/>
</dbReference>
<dbReference type="GO" id="GO:0005634">
    <property type="term" value="C:nucleus"/>
    <property type="evidence" value="ECO:0000318"/>
    <property type="project" value="GO_Central"/>
</dbReference>
<dbReference type="GO" id="GO:0003677">
    <property type="term" value="F:DNA binding"/>
    <property type="evidence" value="ECO:0007669"/>
    <property type="project" value="UniProtKB-KW"/>
</dbReference>
<dbReference type="GO" id="GO:0010468">
    <property type="term" value="P:regulation of gene expression"/>
    <property type="evidence" value="ECO:0000318"/>
    <property type="project" value="GO_Central"/>
</dbReference>
<dbReference type="CDD" id="cd22017">
    <property type="entry name" value="HMG-box_HMG20A"/>
    <property type="match status" value="1"/>
</dbReference>
<dbReference type="Gene3D" id="1.10.30.10">
    <property type="entry name" value="High mobility group box domain"/>
    <property type="match status" value="1"/>
</dbReference>
<dbReference type="InterPro" id="IPR051965">
    <property type="entry name" value="ChromReg_NeuronalGeneExpr"/>
</dbReference>
<dbReference type="InterPro" id="IPR009071">
    <property type="entry name" value="HMG_box_dom"/>
</dbReference>
<dbReference type="InterPro" id="IPR036910">
    <property type="entry name" value="HMG_box_dom_sf"/>
</dbReference>
<dbReference type="PANTHER" id="PTHR46040">
    <property type="entry name" value="HIGH MOBILITY GROUP PROTEIN 2"/>
    <property type="match status" value="1"/>
</dbReference>
<dbReference type="PANTHER" id="PTHR46040:SF1">
    <property type="entry name" value="HIGH MOBILITY GROUP PROTEIN 20A-RELATED"/>
    <property type="match status" value="1"/>
</dbReference>
<dbReference type="Pfam" id="PF00505">
    <property type="entry name" value="HMG_box"/>
    <property type="match status" value="1"/>
</dbReference>
<dbReference type="SMART" id="SM00398">
    <property type="entry name" value="HMG"/>
    <property type="match status" value="1"/>
</dbReference>
<dbReference type="SUPFAM" id="SSF47095">
    <property type="entry name" value="HMG-box"/>
    <property type="match status" value="1"/>
</dbReference>
<dbReference type="PROSITE" id="PS50118">
    <property type="entry name" value="HMG_BOX_2"/>
    <property type="match status" value="1"/>
</dbReference>
<evidence type="ECO:0000255" key="1"/>
<evidence type="ECO:0000255" key="2">
    <source>
        <dbReference type="PROSITE-ProRule" id="PRU00267"/>
    </source>
</evidence>
<evidence type="ECO:0000256" key="3">
    <source>
        <dbReference type="SAM" id="MobiDB-lite"/>
    </source>
</evidence>
<comment type="function">
    <text>Plays a role in neuronal differentiation.</text>
</comment>
<comment type="subcellular location">
    <subcellularLocation>
        <location evidence="2">Nucleus</location>
    </subcellularLocation>
</comment>
<organism>
    <name type="scientific">Xenopus laevis</name>
    <name type="common">African clawed frog</name>
    <dbReference type="NCBI Taxonomy" id="8355"/>
    <lineage>
        <taxon>Eukaryota</taxon>
        <taxon>Metazoa</taxon>
        <taxon>Chordata</taxon>
        <taxon>Craniata</taxon>
        <taxon>Vertebrata</taxon>
        <taxon>Euteleostomi</taxon>
        <taxon>Amphibia</taxon>
        <taxon>Batrachia</taxon>
        <taxon>Anura</taxon>
        <taxon>Pipoidea</taxon>
        <taxon>Pipidae</taxon>
        <taxon>Xenopodinae</taxon>
        <taxon>Xenopus</taxon>
        <taxon>Xenopus</taxon>
    </lineage>
</organism>